<sequence>MSKRQKAFHDSLANEKTRVRLYKSGKNWVKSGIKEIEMFKIMGLPFISHRIVSQDNQSISKKMTGYGLKTTAVIGGAFTVNMLHDQQAFAASDAPLTSELNTQSETVGNQNSTTIEASTSTADSTSVTKNSSSVQTSNSDTVSSEKSENVTSTTNSTSNQQEKLTSTSESTSSKNTTSSSDTKSVASTSSTEQPINTSTNQSTASNNTSQSTTPSSANLNKTSTTSTSTAPVKLRTFSRLAMSTFASAATTTAVTANTITVNKDNLKQYMTASGNATYDQSTGIVTLTQDAYSQKGAITLGTRIDSNKSFHFSGKVNLGNKYEGHGNGGDGIGFAFSPGVLGETGLNGAAVGIGGLSNAFGFKLDTYHNTSTPNASAKAKADPSSVAGGGAFGAFVTTDSYGVASTYTSSSAADNAAKLNVQPTNNAFQDFDINYNGDTKVMTVTYAGQTWTRNISDWIAKSGTTNFSLSMTASTGGATNLQQVQFGTFEYTESAVTQVRYVDVTTGKDIIPPKTYSGNVDQVVTIDNQQSALTAKGYNYTSVDSSYASTYNDTNKTVKMTNAGQSVTYYFTDVKAPTVTVGNQTIEVGKTMNPIVLTTTDNGTGTVTNTVTGLPSGLSYDSATNSIIGTPTKIGQSTVTVVSTDQANNKSTTTFTINVVDTTAPTVTPIGDQSSEVYSPISPIKIATQDNSGNAVTNKSTGLPSGLTFDSTNNTISGTPTNIGTSTITIVSTDASGNKTTTTFKYEVTRNSMSDSVSTSGSTQQSQSVSTSKADSQSASTSTSGSIVVSTSASTSKSTSVSLSDSVSASKSLSTSESNSVSSSTSTSLVNSQSVSSSMSDSASKSTSLSDSISNSSSTEKSESLSTSTSDSLRTSTSLSDSLSMSTSGSLSKSQSLSTSTSDSASTSQSVSDSTSNSISTAESLSESASTSDSISISNSIANSQSASTSKSDSQSTSISLSTSDSKSMSTSESLSDSTSTSDSVSGSLSVAGSQSVSTSTSDSMSTSEIVSDSISTSGSLSASDSKSMSVSSSMSTSQSGSTSESLSDSQSTSDSDSKSLSLSTSQSGSTSTSTSTSSSVRTSESQSTSGSMSTSQSDSTSISTSFSDPTSDSKSASTASSESISQSVSTSTSGSVSTSTSLSTSNSERTSTSMSDSTSLSTSESDSTSDSTSTSDSISEAISGSESTSISLSESNSTGDSESKSASAFLSESLSESTSESTSESLSGSTSDSTSLSDSNSESGSTSTSLSNSTSGSTSISTSTSGSASTSTVKSESVSTSLSTSTSTSLSDSTSLSTSLSDSTSGSKSNSLSASMSTSDSISTRKSESLSASTSLSGSTSESESGSTSSSASQSDSTSMSLSMSQSISGSTSTSTSTSLSDSTSTSLSLSASMNQSGVDSNSASQSASTSTSISTSESDSQSTSTYTSQSTSQSESTSTSTSISDSTSISKSTSQSGSTSTSASLSGSESESDSQSVSTSASESTSESASTSLSDSTSTSNSTSESTSNAISTSASASESDSSSTSLSDSTSASMQSSESDSQSTSTSLSNSQSTSTSIRMSTIVSESVSESTSESGSTSESTSESDSTSTSLSDSQSTSRSTSASGSASTSTSTSDSRSTSAPTSTSMRTSTLDSQSMSLSTSTSTSVSDSTSLSDSVSDSTSDSTSTSTSGSMSASISLSDSTSTSTSASEVMSASISDSQSMSESVNDSESVSESNSESDSKSMSGSTSVSDSGSLSVSTSLRKSESVSESSSLSGSQSMSDSVSTSDSSSLSVSMSLRSSESVSESDSLSDSKSTSGSTSTSTSGSLSTSLSGSESVSESTSLSDSISMSDSTSTSDSDSLSGSISLSGSTSLSTSDSLSDSKSLSSSQSMSGSESTSTSVSDSQSSSASNSQFDSMSISASESDSVSTSDSSSISGSNSTSTSLSTSDSMSGSVSVSTSTSLSDSISGSISVSDSSSTSTSESLSDSMAQSQSTSTSASGSLSTSISTSMSMSASTSTSQSTSVSTSLSTSDSISDSTSISISGSQSAVESESTSDSTSISDSESLSTSDSDSTSTSTSVSTSGSTSTSVSESLSTSGSGSTSVSDSTSMSESDSTSASMSQDKSDSTSISNSESVSTSTSTSLSTSDSTSTSESLSTSMSGSQSISDSTSTSMSNSTSMSNSTSTSMSGSTSTSESNSMHPSDSMSMHHTHSTSTSISTSEATTSTSDSQSTLSATSEATKHNGTRAQSEERLPDTGESIKQNGLLGGIMTLLVGLGLMKRKKKKDENDQDDSQA</sequence>
<evidence type="ECO:0000250" key="1">
    <source>
        <dbReference type="UniProtKB" id="A0A0H2URK1"/>
    </source>
</evidence>
<evidence type="ECO:0000250" key="2">
    <source>
        <dbReference type="UniProtKB" id="Q2FUW1"/>
    </source>
</evidence>
<evidence type="ECO:0000255" key="3">
    <source>
        <dbReference type="PROSITE-ProRule" id="PRU00477"/>
    </source>
</evidence>
<evidence type="ECO:0000256" key="4">
    <source>
        <dbReference type="SAM" id="MobiDB-lite"/>
    </source>
</evidence>
<evidence type="ECO:0000305" key="5"/>
<name>SRAP_STAAU</name>
<reference key="1">
    <citation type="submission" date="2001-12" db="EMBL/GenBank/DDBJ databases">
        <title>Identification of a putative serine-threonine rich antigen from Staphylococcus aureus.</title>
        <authorList>
            <person name="Sharp L.J."/>
            <person name="Henderson B."/>
            <person name="Poole S."/>
            <person name="Nair S."/>
        </authorList>
    </citation>
    <scope>NUCLEOTIDE SEQUENCE [GENOMIC DNA]</scope>
    <source>
        <strain>FRI326</strain>
    </source>
</reference>
<dbReference type="EMBL" id="AF459093">
    <property type="protein sequence ID" value="AAL58470.1"/>
    <property type="molecule type" value="Genomic_DNA"/>
</dbReference>
<dbReference type="SMR" id="Q8VQ99"/>
<dbReference type="GO" id="GO:0005576">
    <property type="term" value="C:extracellular region"/>
    <property type="evidence" value="ECO:0007669"/>
    <property type="project" value="UniProtKB-KW"/>
</dbReference>
<dbReference type="GO" id="GO:0016020">
    <property type="term" value="C:membrane"/>
    <property type="evidence" value="ECO:0007669"/>
    <property type="project" value="InterPro"/>
</dbReference>
<dbReference type="GO" id="GO:0005509">
    <property type="term" value="F:calcium ion binding"/>
    <property type="evidence" value="ECO:0007669"/>
    <property type="project" value="InterPro"/>
</dbReference>
<dbReference type="GO" id="GO:0007155">
    <property type="term" value="P:cell adhesion"/>
    <property type="evidence" value="ECO:0007669"/>
    <property type="project" value="UniProtKB-KW"/>
</dbReference>
<dbReference type="CDD" id="cd01951">
    <property type="entry name" value="lectin_L-type"/>
    <property type="match status" value="1"/>
</dbReference>
<dbReference type="Gene3D" id="2.60.120.200">
    <property type="match status" value="1"/>
</dbReference>
<dbReference type="Gene3D" id="3.10.20.320">
    <property type="entry name" value="Putative peptidoglycan bound protein (lpxtg motif)"/>
    <property type="match status" value="1"/>
</dbReference>
<dbReference type="InterPro" id="IPR015919">
    <property type="entry name" value="Cadherin-like_sf"/>
</dbReference>
<dbReference type="InterPro" id="IPR013320">
    <property type="entry name" value="ConA-like_dom_sf"/>
</dbReference>
<dbReference type="InterPro" id="IPR022263">
    <property type="entry name" value="KxYKxGKxW"/>
</dbReference>
<dbReference type="InterPro" id="IPR056573">
    <property type="entry name" value="Lectin_L-type_dom"/>
</dbReference>
<dbReference type="InterPro" id="IPR019931">
    <property type="entry name" value="LPXTG_anchor"/>
</dbReference>
<dbReference type="NCBIfam" id="TIGR03715">
    <property type="entry name" value="KxYKxGKxW"/>
    <property type="match status" value="1"/>
</dbReference>
<dbReference type="NCBIfam" id="TIGR01167">
    <property type="entry name" value="LPXTG_anchor"/>
    <property type="match status" value="1"/>
</dbReference>
<dbReference type="PANTHER" id="PTHR22928">
    <property type="entry name" value="TELOMERE-ASSOCIATED PROTEIN RIF1"/>
    <property type="match status" value="1"/>
</dbReference>
<dbReference type="PANTHER" id="PTHR22928:SF3">
    <property type="entry name" value="TELOMERE-ASSOCIATED PROTEIN RIF1"/>
    <property type="match status" value="1"/>
</dbReference>
<dbReference type="Pfam" id="PF00746">
    <property type="entry name" value="Gram_pos_anchor"/>
    <property type="match status" value="1"/>
</dbReference>
<dbReference type="Pfam" id="PF19258">
    <property type="entry name" value="KxYKxGKxW_sig"/>
    <property type="match status" value="1"/>
</dbReference>
<dbReference type="Pfam" id="PF18483">
    <property type="entry name" value="Lectin_L-type_dom"/>
    <property type="match status" value="1"/>
</dbReference>
<dbReference type="SUPFAM" id="SSF49313">
    <property type="entry name" value="Cadherin-like"/>
    <property type="match status" value="2"/>
</dbReference>
<dbReference type="SUPFAM" id="SSF49899">
    <property type="entry name" value="Concanavalin A-like lectins/glucanases"/>
    <property type="match status" value="1"/>
</dbReference>
<dbReference type="PROSITE" id="PS50847">
    <property type="entry name" value="GRAM_POS_ANCHORING"/>
    <property type="match status" value="1"/>
</dbReference>
<gene>
    <name type="primary">sraP</name>
</gene>
<accession>Q8VQ99</accession>
<comment type="function">
    <text evidence="2">Mediates binding to human platelets, possibly through a receptor-ligand interaction. Probably associated with virulence in endovascular infection (By similarity).</text>
</comment>
<comment type="subcellular location">
    <subcellularLocation>
        <location evidence="3">Secreted</location>
        <location evidence="3">Cell wall</location>
        <topology evidence="3">Peptidoglycan-anchor</topology>
    </subcellularLocation>
    <text evidence="2">Exported by the accessory SecA2/SecY2 system. Anchored to the cell wall by sortase A (By similarity).</text>
</comment>
<comment type="PTM">
    <text evidence="2">Proteolytically cleaved by a metalloprotease.</text>
</comment>
<comment type="PTM">
    <text evidence="1 2">Glycosylated (By similarity). It is probable that most of the Ser residues in SSR1 and SSR2 are O-GlcNAcylated. Sequential glycosylation by sugar transferases are able to generate complex sugar polymorphisms (By similarity).</text>
</comment>
<comment type="similarity">
    <text evidence="5">Belongs to the serine-rich repeat protein (SRRP) family.</text>
</comment>
<keyword id="KW-0130">Cell adhesion</keyword>
<keyword id="KW-0134">Cell wall</keyword>
<keyword id="KW-0325">Glycoprotein</keyword>
<keyword id="KW-0572">Peptidoglycan-anchor</keyword>
<keyword id="KW-0964">Secreted</keyword>
<keyword id="KW-0732">Signal</keyword>
<keyword id="KW-0843">Virulence</keyword>
<organism>
    <name type="scientific">Staphylococcus aureus</name>
    <dbReference type="NCBI Taxonomy" id="1280"/>
    <lineage>
        <taxon>Bacteria</taxon>
        <taxon>Bacillati</taxon>
        <taxon>Bacillota</taxon>
        <taxon>Bacilli</taxon>
        <taxon>Bacillales</taxon>
        <taxon>Staphylococcaceae</taxon>
        <taxon>Staphylococcus</taxon>
    </lineage>
</organism>
<protein>
    <recommendedName>
        <fullName>Serine-rich adhesin for platelets</fullName>
    </recommendedName>
    <alternativeName>
        <fullName evidence="5">Adhesin SraP</fullName>
    </alternativeName>
    <alternativeName>
        <fullName>Staphylococcus aureus surface protein A</fullName>
    </alternativeName>
</protein>
<proteinExistence type="inferred from homology"/>
<feature type="signal peptide" evidence="2">
    <location>
        <begin position="1"/>
        <end position="89"/>
    </location>
</feature>
<feature type="chain" id="PRO_0000273918" description="Serine-rich adhesin for platelets">
    <location>
        <begin position="90"/>
        <end position="2244"/>
    </location>
</feature>
<feature type="propeptide" id="PRO_0000273919" description="Removed by sortase" evidence="3">
    <location>
        <begin position="2245"/>
        <end position="2283"/>
    </location>
</feature>
<feature type="region of interest" description="Serine-rich repeat region 1, SRR1" evidence="2">
    <location>
        <begin position="90"/>
        <end position="230"/>
    </location>
</feature>
<feature type="region of interest" description="Disordered" evidence="4">
    <location>
        <begin position="100"/>
        <end position="230"/>
    </location>
</feature>
<feature type="region of interest" description="Non-repeat region (NRR)" evidence="2">
    <location>
        <begin position="231"/>
        <end position="751"/>
    </location>
</feature>
<feature type="region of interest" description="Disordered" evidence="4">
    <location>
        <begin position="691"/>
        <end position="721"/>
    </location>
</feature>
<feature type="region of interest" description="Disordered" evidence="4">
    <location>
        <begin position="751"/>
        <end position="2255"/>
    </location>
</feature>
<feature type="region of interest" description="Serine-rich repeat region 2, SRR2" evidence="2">
    <location>
        <begin position="752"/>
        <end position="2244"/>
    </location>
</feature>
<feature type="short sequence motif" description="LPXTG sorting signal" evidence="3">
    <location>
        <begin position="2241"/>
        <end position="2245"/>
    </location>
</feature>
<feature type="compositionally biased region" description="Polar residues" evidence="4">
    <location>
        <begin position="100"/>
        <end position="111"/>
    </location>
</feature>
<feature type="compositionally biased region" description="Low complexity" evidence="4">
    <location>
        <begin position="112"/>
        <end position="128"/>
    </location>
</feature>
<feature type="compositionally biased region" description="Polar residues" evidence="4">
    <location>
        <begin position="129"/>
        <end position="140"/>
    </location>
</feature>
<feature type="compositionally biased region" description="Low complexity" evidence="4">
    <location>
        <begin position="149"/>
        <end position="229"/>
    </location>
</feature>
<feature type="compositionally biased region" description="Low complexity" evidence="4">
    <location>
        <begin position="752"/>
        <end position="1323"/>
    </location>
</feature>
<feature type="compositionally biased region" description="Low complexity" evidence="4">
    <location>
        <begin position="1330"/>
        <end position="1894"/>
    </location>
</feature>
<feature type="compositionally biased region" description="Low complexity" evidence="4">
    <location>
        <begin position="1901"/>
        <end position="2225"/>
    </location>
</feature>
<feature type="modified residue" description="Pentaglycyl murein peptidoglycan amidated threonine" evidence="3">
    <location>
        <position position="2244"/>
    </location>
</feature>